<evidence type="ECO:0000250" key="1"/>
<evidence type="ECO:0000255" key="2"/>
<evidence type="ECO:0000256" key="3">
    <source>
        <dbReference type="SAM" id="MobiDB-lite"/>
    </source>
</evidence>
<evidence type="ECO:0000305" key="4"/>
<protein>
    <recommendedName>
        <fullName>Required for respiratory growth protein 9, mitochondrial</fullName>
    </recommendedName>
</protein>
<sequence length="284" mass="32180">MAVFCASSARLALPTLLRNIYRSEFASELHSSRPVSLRQVSYSHNRFNNGRSFASLSRLLASQSGSHMNPQPSSQPIITESSSEQLDAAEDGSIVGAPTKDAAVNRDRRDPDKPTRKTKKAKFASSQTEPDATSAKSSRDKKHVRSDRASPDYKPKKKKEPWQIQKDALKKKFKEGWNPSKKLSPDALEGIRHLHAVAPDKFTTPVLAEQFQVSPEAIRRILKSKWRPSETEMEDRRKRWEKRHDRIWSHLSELGLRPKTKRTEALDDSNILYGKGEEGNKPSE</sequence>
<proteinExistence type="inferred from homology"/>
<reference key="1">
    <citation type="journal article" date="2005" name="Nature">
        <title>Genome sequencing and analysis of Aspergillus oryzae.</title>
        <authorList>
            <person name="Machida M."/>
            <person name="Asai K."/>
            <person name="Sano M."/>
            <person name="Tanaka T."/>
            <person name="Kumagai T."/>
            <person name="Terai G."/>
            <person name="Kusumoto K."/>
            <person name="Arima T."/>
            <person name="Akita O."/>
            <person name="Kashiwagi Y."/>
            <person name="Abe K."/>
            <person name="Gomi K."/>
            <person name="Horiuchi H."/>
            <person name="Kitamoto K."/>
            <person name="Kobayashi T."/>
            <person name="Takeuchi M."/>
            <person name="Denning D.W."/>
            <person name="Galagan J.E."/>
            <person name="Nierman W.C."/>
            <person name="Yu J."/>
            <person name="Archer D.B."/>
            <person name="Bennett J.W."/>
            <person name="Bhatnagar D."/>
            <person name="Cleveland T.E."/>
            <person name="Fedorova N.D."/>
            <person name="Gotoh O."/>
            <person name="Horikawa H."/>
            <person name="Hosoyama A."/>
            <person name="Ichinomiya M."/>
            <person name="Igarashi R."/>
            <person name="Iwashita K."/>
            <person name="Juvvadi P.R."/>
            <person name="Kato M."/>
            <person name="Kato Y."/>
            <person name="Kin T."/>
            <person name="Kokubun A."/>
            <person name="Maeda H."/>
            <person name="Maeyama N."/>
            <person name="Maruyama J."/>
            <person name="Nagasaki H."/>
            <person name="Nakajima T."/>
            <person name="Oda K."/>
            <person name="Okada K."/>
            <person name="Paulsen I."/>
            <person name="Sakamoto K."/>
            <person name="Sawano T."/>
            <person name="Takahashi M."/>
            <person name="Takase K."/>
            <person name="Terabayashi Y."/>
            <person name="Wortman J.R."/>
            <person name="Yamada O."/>
            <person name="Yamagata Y."/>
            <person name="Anazawa H."/>
            <person name="Hata Y."/>
            <person name="Koide Y."/>
            <person name="Komori T."/>
            <person name="Koyama Y."/>
            <person name="Minetoki T."/>
            <person name="Suharnan S."/>
            <person name="Tanaka A."/>
            <person name="Isono K."/>
            <person name="Kuhara S."/>
            <person name="Ogasawara N."/>
            <person name="Kikuchi H."/>
        </authorList>
    </citation>
    <scope>NUCLEOTIDE SEQUENCE [LARGE SCALE GENOMIC DNA]</scope>
    <source>
        <strain>ATCC 42149 / RIB 40</strain>
    </source>
</reference>
<comment type="function">
    <text evidence="1">Required for respiratory activity and maintenance and expression of the mitochondrial genome.</text>
</comment>
<comment type="subcellular location">
    <subcellularLocation>
        <location evidence="1">Mitochondrion</location>
    </subcellularLocation>
</comment>
<comment type="similarity">
    <text evidence="4">Belongs to the RRG9 family.</text>
</comment>
<organism>
    <name type="scientific">Aspergillus oryzae (strain ATCC 42149 / RIB 40)</name>
    <name type="common">Yellow koji mold</name>
    <dbReference type="NCBI Taxonomy" id="510516"/>
    <lineage>
        <taxon>Eukaryota</taxon>
        <taxon>Fungi</taxon>
        <taxon>Dikarya</taxon>
        <taxon>Ascomycota</taxon>
        <taxon>Pezizomycotina</taxon>
        <taxon>Eurotiomycetes</taxon>
        <taxon>Eurotiomycetidae</taxon>
        <taxon>Eurotiales</taxon>
        <taxon>Aspergillaceae</taxon>
        <taxon>Aspergillus</taxon>
        <taxon>Aspergillus subgen. Circumdati</taxon>
    </lineage>
</organism>
<dbReference type="EMBL" id="BA000051">
    <property type="protein sequence ID" value="BAE59832.1"/>
    <property type="molecule type" value="Genomic_DNA"/>
</dbReference>
<dbReference type="RefSeq" id="XP_001821834.1">
    <property type="nucleotide sequence ID" value="XM_001821782.2"/>
</dbReference>
<dbReference type="SMR" id="Q2UF33"/>
<dbReference type="STRING" id="510516.Q2UF33"/>
<dbReference type="EnsemblFungi" id="BAE59832">
    <property type="protein sequence ID" value="BAE59832"/>
    <property type="gene ID" value="AO090026000369"/>
</dbReference>
<dbReference type="GeneID" id="5993862"/>
<dbReference type="KEGG" id="aor:AO090026000369"/>
<dbReference type="VEuPathDB" id="FungiDB:AO090026000369"/>
<dbReference type="HOGENOM" id="CLU_047598_3_0_1"/>
<dbReference type="OMA" id="KPEKWQI"/>
<dbReference type="OrthoDB" id="109948at5052"/>
<dbReference type="Proteomes" id="UP000006564">
    <property type="component" value="Chromosome 3"/>
</dbReference>
<dbReference type="GO" id="GO:0005739">
    <property type="term" value="C:mitochondrion"/>
    <property type="evidence" value="ECO:0007669"/>
    <property type="project" value="UniProtKB-SubCell"/>
</dbReference>
<dbReference type="GO" id="GO:0005634">
    <property type="term" value="C:nucleus"/>
    <property type="evidence" value="ECO:0007669"/>
    <property type="project" value="TreeGrafter"/>
</dbReference>
<dbReference type="InterPro" id="IPR010487">
    <property type="entry name" value="NGRN/Rrg9"/>
</dbReference>
<dbReference type="PANTHER" id="PTHR13475">
    <property type="entry name" value="NEUGRIN"/>
    <property type="match status" value="1"/>
</dbReference>
<dbReference type="PANTHER" id="PTHR13475:SF3">
    <property type="entry name" value="NEUGRIN"/>
    <property type="match status" value="1"/>
</dbReference>
<dbReference type="Pfam" id="PF06413">
    <property type="entry name" value="Neugrin"/>
    <property type="match status" value="1"/>
</dbReference>
<name>RRG9_ASPOR</name>
<feature type="transit peptide" description="Mitochondrion" evidence="2">
    <location>
        <begin position="1"/>
        <end position="53"/>
    </location>
</feature>
<feature type="chain" id="PRO_0000407941" description="Required for respiratory growth protein 9, mitochondrial">
    <location>
        <begin position="54"/>
        <end position="284"/>
    </location>
</feature>
<feature type="region of interest" description="Disordered" evidence="3">
    <location>
        <begin position="62"/>
        <end position="184"/>
    </location>
</feature>
<feature type="region of interest" description="Disordered" evidence="3">
    <location>
        <begin position="258"/>
        <end position="284"/>
    </location>
</feature>
<feature type="compositionally biased region" description="Polar residues" evidence="3">
    <location>
        <begin position="67"/>
        <end position="85"/>
    </location>
</feature>
<feature type="compositionally biased region" description="Basic and acidic residues" evidence="3">
    <location>
        <begin position="103"/>
        <end position="115"/>
    </location>
</feature>
<feature type="compositionally biased region" description="Polar residues" evidence="3">
    <location>
        <begin position="124"/>
        <end position="136"/>
    </location>
</feature>
<feature type="compositionally biased region" description="Basic and acidic residues" evidence="3">
    <location>
        <begin position="275"/>
        <end position="284"/>
    </location>
</feature>
<accession>Q2UF33</accession>
<gene>
    <name type="primary">rrg9</name>
    <name type="ORF">AO090026000369</name>
</gene>
<keyword id="KW-0496">Mitochondrion</keyword>
<keyword id="KW-1185">Reference proteome</keyword>
<keyword id="KW-0809">Transit peptide</keyword>